<comment type="function">
    <text evidence="1">Component of the dark-operative protochlorophyllide reductase (DPOR) that uses Mg-ATP and reduced ferredoxin to reduce ring D of protochlorophyllide (Pchlide) to form chlorophyllide a (Chlide). This reaction is light-independent. The NB-protein (ChlN-ChlB) is the catalytic component of the complex.</text>
</comment>
<comment type="catalytic activity">
    <reaction evidence="1">
        <text>chlorophyllide a + oxidized 2[4Fe-4S]-[ferredoxin] + 2 ADP + 2 phosphate = protochlorophyllide a + reduced 2[4Fe-4S]-[ferredoxin] + 2 ATP + 2 H2O</text>
        <dbReference type="Rhea" id="RHEA:28202"/>
        <dbReference type="Rhea" id="RHEA-COMP:10002"/>
        <dbReference type="Rhea" id="RHEA-COMP:10004"/>
        <dbReference type="ChEBI" id="CHEBI:15377"/>
        <dbReference type="ChEBI" id="CHEBI:30616"/>
        <dbReference type="ChEBI" id="CHEBI:33722"/>
        <dbReference type="ChEBI" id="CHEBI:33723"/>
        <dbReference type="ChEBI" id="CHEBI:43474"/>
        <dbReference type="ChEBI" id="CHEBI:83348"/>
        <dbReference type="ChEBI" id="CHEBI:83350"/>
        <dbReference type="ChEBI" id="CHEBI:456216"/>
        <dbReference type="EC" id="1.3.7.7"/>
    </reaction>
</comment>
<comment type="cofactor">
    <cofactor evidence="1">
        <name>[4Fe-4S] cluster</name>
        <dbReference type="ChEBI" id="CHEBI:49883"/>
    </cofactor>
    <text evidence="1">Binds 1 [4Fe-4S] cluster per heterodimer. The cluster is bound at the heterodimer interface by residues from both subunits.</text>
</comment>
<comment type="pathway">
    <text evidence="1">Porphyrin-containing compound metabolism; chlorophyll biosynthesis (light-independent).</text>
</comment>
<comment type="subunit">
    <text evidence="1">Protochlorophyllide reductase is composed of three subunits; ChlL, ChlN and ChlB. Forms a heterotetramer of two ChlB and two ChlN subunits.</text>
</comment>
<comment type="similarity">
    <text evidence="1">Belongs to the BchN/ChlN family.</text>
</comment>
<name>CHLN_PROM9</name>
<accession>Q31BY9</accession>
<gene>
    <name evidence="1" type="primary">chlN</name>
    <name type="ordered locus">PMT9312_0545</name>
</gene>
<protein>
    <recommendedName>
        <fullName evidence="1">Light-independent protochlorophyllide reductase subunit N</fullName>
        <shortName evidence="1">DPOR subunit N</shortName>
        <shortName evidence="1">LI-POR subunit N</shortName>
        <ecNumber evidence="1">1.3.7.7</ecNumber>
    </recommendedName>
</protein>
<reference key="1">
    <citation type="journal article" date="2006" name="Science">
        <title>Genomic islands and the ecology and evolution of Prochlorococcus.</title>
        <authorList>
            <person name="Coleman M.L."/>
            <person name="Sullivan M.B."/>
            <person name="Martiny A.C."/>
            <person name="Steglich C."/>
            <person name="Barry K."/>
            <person name="Delong E.F."/>
            <person name="Chisholm S.W."/>
        </authorList>
    </citation>
    <scope>NUCLEOTIDE SEQUENCE [LARGE SCALE GENOMIC DNA]</scope>
    <source>
        <strain>MIT 9312</strain>
    </source>
</reference>
<sequence length="418" mass="46445">MSKVELNKETGPREVFCGLTSIVWLHRRMPDAFFLVVGSRTCAHLIQSAAGVMIFAEPRFGTAILEEKDLAGLADAHEELDRVVNDLISRRPEIKTLFLVGSCPSEVIKLDLATVSEKLNKRFLGQVRFVNYSGSGIETTFTQGEDGALKALVPLMESTDDEKLLLVGTLANNVEDRFKKIFNHIGITNVESFPPRQSTELPKIGKNTKVLLTQPYLSDTVRDLKHRGCEIIYAPFPLGVEGSSKWFLAGADAFKINELKVHEVIAPLANRARQALEKHTEILRGKKLFLLPESQLEISLARFLHNECGMELIEVGTPYLNKDLMDEELNLLPDDTKIVEGQHVEKQLDRVRATSPDLVVCGMGLANPLEAEGISTKWSIEMVFSPIHGIDQAADLAGLFSRPLKRNQILTSKTLATH</sequence>
<feature type="chain" id="PRO_0000324013" description="Light-independent protochlorophyllide reductase subunit N">
    <location>
        <begin position="1"/>
        <end position="418"/>
    </location>
</feature>
<feature type="binding site" evidence="1">
    <location>
        <position position="17"/>
    </location>
    <ligand>
        <name>[4Fe-4S] cluster</name>
        <dbReference type="ChEBI" id="CHEBI:49883"/>
        <note>ligand shared with heterodimeric partner</note>
    </ligand>
</feature>
<feature type="binding site" evidence="1">
    <location>
        <position position="42"/>
    </location>
    <ligand>
        <name>[4Fe-4S] cluster</name>
        <dbReference type="ChEBI" id="CHEBI:49883"/>
        <note>ligand shared with heterodimeric partner</note>
    </ligand>
</feature>
<feature type="binding site" evidence="1">
    <location>
        <position position="103"/>
    </location>
    <ligand>
        <name>[4Fe-4S] cluster</name>
        <dbReference type="ChEBI" id="CHEBI:49883"/>
        <note>ligand shared with heterodimeric partner</note>
    </ligand>
</feature>
<evidence type="ECO:0000255" key="1">
    <source>
        <dbReference type="HAMAP-Rule" id="MF_00352"/>
    </source>
</evidence>
<proteinExistence type="inferred from homology"/>
<keyword id="KW-0004">4Fe-4S</keyword>
<keyword id="KW-0067">ATP-binding</keyword>
<keyword id="KW-0149">Chlorophyll biosynthesis</keyword>
<keyword id="KW-0408">Iron</keyword>
<keyword id="KW-0411">Iron-sulfur</keyword>
<keyword id="KW-0479">Metal-binding</keyword>
<keyword id="KW-0547">Nucleotide-binding</keyword>
<keyword id="KW-0560">Oxidoreductase</keyword>
<keyword id="KW-0602">Photosynthesis</keyword>
<dbReference type="EC" id="1.3.7.7" evidence="1"/>
<dbReference type="EMBL" id="CP000111">
    <property type="protein sequence ID" value="ABB49606.1"/>
    <property type="molecule type" value="Genomic_DNA"/>
</dbReference>
<dbReference type="RefSeq" id="WP_011376104.1">
    <property type="nucleotide sequence ID" value="NC_007577.1"/>
</dbReference>
<dbReference type="SMR" id="Q31BY9"/>
<dbReference type="STRING" id="74546.PMT9312_0545"/>
<dbReference type="KEGG" id="pmi:PMT9312_0545"/>
<dbReference type="eggNOG" id="COG2710">
    <property type="taxonomic scope" value="Bacteria"/>
</dbReference>
<dbReference type="HOGENOM" id="CLU_037170_0_0_3"/>
<dbReference type="OrthoDB" id="5714774at2"/>
<dbReference type="UniPathway" id="UPA00670"/>
<dbReference type="Proteomes" id="UP000002715">
    <property type="component" value="Chromosome"/>
</dbReference>
<dbReference type="GO" id="GO:0051539">
    <property type="term" value="F:4 iron, 4 sulfur cluster binding"/>
    <property type="evidence" value="ECO:0007669"/>
    <property type="project" value="UniProtKB-UniRule"/>
</dbReference>
<dbReference type="GO" id="GO:0005524">
    <property type="term" value="F:ATP binding"/>
    <property type="evidence" value="ECO:0007669"/>
    <property type="project" value="UniProtKB-UniRule"/>
</dbReference>
<dbReference type="GO" id="GO:0046872">
    <property type="term" value="F:metal ion binding"/>
    <property type="evidence" value="ECO:0007669"/>
    <property type="project" value="UniProtKB-KW"/>
</dbReference>
<dbReference type="GO" id="GO:0016730">
    <property type="term" value="F:oxidoreductase activity, acting on iron-sulfur proteins as donors"/>
    <property type="evidence" value="ECO:0007669"/>
    <property type="project" value="InterPro"/>
</dbReference>
<dbReference type="GO" id="GO:0016636">
    <property type="term" value="F:oxidoreductase activity, acting on the CH-CH group of donors, iron-sulfur protein as acceptor"/>
    <property type="evidence" value="ECO:0007669"/>
    <property type="project" value="UniProtKB-UniRule"/>
</dbReference>
<dbReference type="GO" id="GO:0036068">
    <property type="term" value="P:light-independent chlorophyll biosynthetic process"/>
    <property type="evidence" value="ECO:0007669"/>
    <property type="project" value="UniProtKB-UniRule"/>
</dbReference>
<dbReference type="GO" id="GO:0019685">
    <property type="term" value="P:photosynthesis, dark reaction"/>
    <property type="evidence" value="ECO:0007669"/>
    <property type="project" value="InterPro"/>
</dbReference>
<dbReference type="Gene3D" id="3.40.50.1980">
    <property type="entry name" value="Nitrogenase molybdenum iron protein domain"/>
    <property type="match status" value="3"/>
</dbReference>
<dbReference type="HAMAP" id="MF_00352">
    <property type="entry name" value="ChlN_BchN"/>
    <property type="match status" value="1"/>
</dbReference>
<dbReference type="InterPro" id="IPR050293">
    <property type="entry name" value="LIPOR_BchN/ChlN"/>
</dbReference>
<dbReference type="InterPro" id="IPR000510">
    <property type="entry name" value="Nase/OxRdtase_comp1"/>
</dbReference>
<dbReference type="InterPro" id="IPR005970">
    <property type="entry name" value="Protochl_reductN"/>
</dbReference>
<dbReference type="NCBIfam" id="TIGR01279">
    <property type="entry name" value="DPOR_bchN"/>
    <property type="match status" value="1"/>
</dbReference>
<dbReference type="NCBIfam" id="NF002768">
    <property type="entry name" value="PRK02842.1"/>
    <property type="match status" value="1"/>
</dbReference>
<dbReference type="PANTHER" id="PTHR39429">
    <property type="entry name" value="LIGHT-INDEPENDENT PROTOCHLOROPHYLLIDE REDUCTASE SUBUNIT N"/>
    <property type="match status" value="1"/>
</dbReference>
<dbReference type="PANTHER" id="PTHR39429:SF3">
    <property type="entry name" value="LIGHT-INDEPENDENT PROTOCHLOROPHYLLIDE REDUCTASE SUBUNIT N"/>
    <property type="match status" value="1"/>
</dbReference>
<dbReference type="Pfam" id="PF00148">
    <property type="entry name" value="Oxidored_nitro"/>
    <property type="match status" value="1"/>
</dbReference>
<dbReference type="PIRSF" id="PIRSF000162">
    <property type="entry name" value="P_chlorophyll_rd"/>
    <property type="match status" value="1"/>
</dbReference>
<dbReference type="SUPFAM" id="SSF53807">
    <property type="entry name" value="Helical backbone' metal receptor"/>
    <property type="match status" value="1"/>
</dbReference>
<organism>
    <name type="scientific">Prochlorococcus marinus (strain MIT 9312)</name>
    <dbReference type="NCBI Taxonomy" id="74546"/>
    <lineage>
        <taxon>Bacteria</taxon>
        <taxon>Bacillati</taxon>
        <taxon>Cyanobacteriota</taxon>
        <taxon>Cyanophyceae</taxon>
        <taxon>Synechococcales</taxon>
        <taxon>Prochlorococcaceae</taxon>
        <taxon>Prochlorococcus</taxon>
    </lineage>
</organism>